<sequence>MDNKGWSLKGSLLFLLLLLSDLLLCKSVASLPICPSGAVNCQVSLRDLFDRAVILSHYIHNLSSEMFNEFDKRYAQGRGFITKAINSCHTSSLPTPEDKEQAQQIHHEDLLNVILRVLRSWNDPLYHLVTEVRGLHEAPDAILSRAIEIEEQNRRLLEGMEKIVHQVHPGVRENEVYSVWSGLPSLQMADEDSRLFAFYNLLHCLRRDSHKIDSYLKLLKCRIVYDSNC</sequence>
<feature type="signal peptide" evidence="1">
    <location>
        <begin position="1"/>
        <end position="30"/>
    </location>
</feature>
<feature type="chain" id="PRO_0000032914" description="Prolactin">
    <location>
        <begin position="31"/>
        <end position="229"/>
    </location>
</feature>
<feature type="modified residue" description="Phosphoserine" evidence="3">
    <location>
        <position position="56"/>
    </location>
</feature>
<feature type="modified residue" description="Phosphoserine" evidence="3">
    <location>
        <position position="64"/>
    </location>
</feature>
<feature type="modified residue" description="Phosphoserine" evidence="3">
    <location>
        <position position="120"/>
    </location>
</feature>
<feature type="glycosylation site" description="N-linked (GlcNAc...) asparagine" evidence="4">
    <location>
        <position position="61"/>
    </location>
</feature>
<feature type="disulfide bond" evidence="1">
    <location>
        <begin position="34"/>
        <end position="41"/>
    </location>
</feature>
<feature type="disulfide bond" evidence="1">
    <location>
        <begin position="88"/>
        <end position="204"/>
    </location>
</feature>
<feature type="disulfide bond" evidence="1">
    <location>
        <begin position="221"/>
        <end position="229"/>
    </location>
</feature>
<proteinExistence type="evidence at transcript level"/>
<gene>
    <name type="primary">PRL</name>
</gene>
<keyword id="KW-1015">Disulfide bond</keyword>
<keyword id="KW-0325">Glycoprotein</keyword>
<keyword id="KW-0372">Hormone</keyword>
<keyword id="KW-0421">Lactation</keyword>
<keyword id="KW-0597">Phosphoprotein</keyword>
<keyword id="KW-1185">Reference proteome</keyword>
<keyword id="KW-0964">Secreted</keyword>
<keyword id="KW-0732">Signal</keyword>
<protein>
    <recommendedName>
        <fullName>Prolactin</fullName>
        <shortName>PRL</shortName>
    </recommendedName>
</protein>
<comment type="function">
    <text>Prolactin acts primarily on the mammary gland by promoting lactation.</text>
</comment>
<comment type="subunit">
    <text evidence="2">Interacts with PRLR.</text>
</comment>
<comment type="subcellular location">
    <subcellularLocation>
        <location>Secreted</location>
    </subcellularLocation>
</comment>
<comment type="similarity">
    <text evidence="5">Belongs to the somatotropin/prolactin family.</text>
</comment>
<evidence type="ECO:0000250" key="1"/>
<evidence type="ECO:0000250" key="2">
    <source>
        <dbReference type="UniProtKB" id="P01236"/>
    </source>
</evidence>
<evidence type="ECO:0000250" key="3">
    <source>
        <dbReference type="UniProtKB" id="P01239"/>
    </source>
</evidence>
<evidence type="ECO:0000255" key="4"/>
<evidence type="ECO:0000305" key="5"/>
<organism>
    <name type="scientific">Felis catus</name>
    <name type="common">Cat</name>
    <name type="synonym">Felis silvestris catus</name>
    <dbReference type="NCBI Taxonomy" id="9685"/>
    <lineage>
        <taxon>Eukaryota</taxon>
        <taxon>Metazoa</taxon>
        <taxon>Chordata</taxon>
        <taxon>Craniata</taxon>
        <taxon>Vertebrata</taxon>
        <taxon>Euteleostomi</taxon>
        <taxon>Mammalia</taxon>
        <taxon>Eutheria</taxon>
        <taxon>Laurasiatheria</taxon>
        <taxon>Carnivora</taxon>
        <taxon>Feliformia</taxon>
        <taxon>Felidae</taxon>
        <taxon>Felinae</taxon>
        <taxon>Felis</taxon>
    </lineage>
</organism>
<dbReference type="EMBL" id="U25974">
    <property type="protein sequence ID" value="AAA67295.1"/>
    <property type="molecule type" value="mRNA"/>
</dbReference>
<dbReference type="PIR" id="JC4631">
    <property type="entry name" value="JC4631"/>
</dbReference>
<dbReference type="RefSeq" id="NP_001036806.1">
    <property type="nucleotide sequence ID" value="NM_001043341.1"/>
</dbReference>
<dbReference type="SMR" id="P46403"/>
<dbReference type="FunCoup" id="P46403">
    <property type="interactions" value="13"/>
</dbReference>
<dbReference type="STRING" id="9685.ENSFCAP00000013943"/>
<dbReference type="GlyCosmos" id="P46403">
    <property type="glycosylation" value="1 site, No reported glycans"/>
</dbReference>
<dbReference type="PaxDb" id="9685-ENSFCAP00000013943"/>
<dbReference type="Ensembl" id="ENSFCAT00000015037.5">
    <property type="protein sequence ID" value="ENSFCAP00000013943.3"/>
    <property type="gene ID" value="ENSFCAG00000015035.6"/>
</dbReference>
<dbReference type="GeneID" id="751517"/>
<dbReference type="KEGG" id="fca:751517"/>
<dbReference type="CTD" id="5617"/>
<dbReference type="VGNC" id="VGNC:69075">
    <property type="gene designation" value="PRL"/>
</dbReference>
<dbReference type="eggNOG" id="ENOG502QYU3">
    <property type="taxonomic scope" value="Eukaryota"/>
</dbReference>
<dbReference type="GeneTree" id="ENSGT00950000182818"/>
<dbReference type="HOGENOM" id="CLU_088274_0_1_1"/>
<dbReference type="InParanoid" id="P46403"/>
<dbReference type="OrthoDB" id="9946219at2759"/>
<dbReference type="Proteomes" id="UP000011712">
    <property type="component" value="Chromosome B2"/>
</dbReference>
<dbReference type="Bgee" id="ENSFCAG00000015035">
    <property type="expression patterns" value="Expressed in embryonic head and 3 other cell types or tissues"/>
</dbReference>
<dbReference type="GO" id="GO:0005615">
    <property type="term" value="C:extracellular space"/>
    <property type="evidence" value="ECO:0000318"/>
    <property type="project" value="GO_Central"/>
</dbReference>
<dbReference type="GO" id="GO:0005179">
    <property type="term" value="F:hormone activity"/>
    <property type="evidence" value="ECO:0000318"/>
    <property type="project" value="GO_Central"/>
</dbReference>
<dbReference type="GO" id="GO:0005148">
    <property type="term" value="F:prolactin receptor binding"/>
    <property type="evidence" value="ECO:0000318"/>
    <property type="project" value="GO_Central"/>
</dbReference>
<dbReference type="GO" id="GO:0007166">
    <property type="term" value="P:cell surface receptor signaling pathway"/>
    <property type="evidence" value="ECO:0000318"/>
    <property type="project" value="GO_Central"/>
</dbReference>
<dbReference type="GO" id="GO:0007565">
    <property type="term" value="P:female pregnancy"/>
    <property type="evidence" value="ECO:0000318"/>
    <property type="project" value="GO_Central"/>
</dbReference>
<dbReference type="GO" id="GO:0007595">
    <property type="term" value="P:lactation"/>
    <property type="evidence" value="ECO:0007669"/>
    <property type="project" value="UniProtKB-KW"/>
</dbReference>
<dbReference type="GO" id="GO:0030879">
    <property type="term" value="P:mammary gland development"/>
    <property type="evidence" value="ECO:0000318"/>
    <property type="project" value="GO_Central"/>
</dbReference>
<dbReference type="GO" id="GO:1903489">
    <property type="term" value="P:positive regulation of lactation"/>
    <property type="evidence" value="ECO:0000318"/>
    <property type="project" value="GO_Central"/>
</dbReference>
<dbReference type="GO" id="GO:0046427">
    <property type="term" value="P:positive regulation of receptor signaling pathway via JAK-STAT"/>
    <property type="evidence" value="ECO:0000318"/>
    <property type="project" value="GO_Central"/>
</dbReference>
<dbReference type="GO" id="GO:0031667">
    <property type="term" value="P:response to nutrient levels"/>
    <property type="evidence" value="ECO:0000318"/>
    <property type="project" value="GO_Central"/>
</dbReference>
<dbReference type="CDD" id="cd10288">
    <property type="entry name" value="prolactin_like"/>
    <property type="match status" value="1"/>
</dbReference>
<dbReference type="FunFam" id="1.20.1250.10:FF:000003">
    <property type="entry name" value="Prolactin"/>
    <property type="match status" value="1"/>
</dbReference>
<dbReference type="Gene3D" id="1.20.1250.10">
    <property type="match status" value="1"/>
</dbReference>
<dbReference type="InterPro" id="IPR009079">
    <property type="entry name" value="4_helix_cytokine-like_core"/>
</dbReference>
<dbReference type="InterPro" id="IPR001400">
    <property type="entry name" value="Somatotropin/Prolactin"/>
</dbReference>
<dbReference type="InterPro" id="IPR018116">
    <property type="entry name" value="Somatotropin_CS"/>
</dbReference>
<dbReference type="PANTHER" id="PTHR11417:SF5">
    <property type="entry name" value="PROLACTIN"/>
    <property type="match status" value="1"/>
</dbReference>
<dbReference type="PANTHER" id="PTHR11417">
    <property type="entry name" value="SOMATOTROPIN,PROLACTIN"/>
    <property type="match status" value="1"/>
</dbReference>
<dbReference type="Pfam" id="PF00103">
    <property type="entry name" value="Hormone_1"/>
    <property type="match status" value="1"/>
</dbReference>
<dbReference type="PRINTS" id="PR00836">
    <property type="entry name" value="SOMATOTROPIN"/>
</dbReference>
<dbReference type="SUPFAM" id="SSF47266">
    <property type="entry name" value="4-helical cytokines"/>
    <property type="match status" value="1"/>
</dbReference>
<dbReference type="PROSITE" id="PS00266">
    <property type="entry name" value="SOMATOTROPIN_1"/>
    <property type="match status" value="1"/>
</dbReference>
<dbReference type="PROSITE" id="PS00338">
    <property type="entry name" value="SOMATOTROPIN_2"/>
    <property type="match status" value="1"/>
</dbReference>
<name>PRL_FELCA</name>
<accession>P46403</accession>
<reference key="1">
    <citation type="journal article" date="1996" name="Gene">
        <title>Cloning of the cDNAs coding for cat growth hormone and prolactin.</title>
        <authorList>
            <person name="Warren W.C."/>
            <person name="Bentle K.A."/>
            <person name="Bogosian G."/>
        </authorList>
    </citation>
    <scope>NUCLEOTIDE SEQUENCE [MRNA]</scope>
    <source>
        <tissue>Pituitary</tissue>
    </source>
</reference>